<evidence type="ECO:0000255" key="1">
    <source>
        <dbReference type="HAMAP-Rule" id="MF_02007"/>
    </source>
</evidence>
<name>SYY_CUPPJ</name>
<organism>
    <name type="scientific">Cupriavidus pinatubonensis (strain JMP 134 / LMG 1197)</name>
    <name type="common">Cupriavidus necator (strain JMP 134)</name>
    <dbReference type="NCBI Taxonomy" id="264198"/>
    <lineage>
        <taxon>Bacteria</taxon>
        <taxon>Pseudomonadati</taxon>
        <taxon>Pseudomonadota</taxon>
        <taxon>Betaproteobacteria</taxon>
        <taxon>Burkholderiales</taxon>
        <taxon>Burkholderiaceae</taxon>
        <taxon>Cupriavidus</taxon>
    </lineage>
</organism>
<protein>
    <recommendedName>
        <fullName evidence="1">Tyrosine--tRNA ligase</fullName>
        <ecNumber evidence="1">6.1.1.1</ecNumber>
    </recommendedName>
    <alternativeName>
        <fullName evidence="1">Tyrosyl-tRNA synthetase</fullName>
        <shortName evidence="1">TyrRS</shortName>
    </alternativeName>
</protein>
<dbReference type="EC" id="6.1.1.1" evidence="1"/>
<dbReference type="EMBL" id="CP000090">
    <property type="protein sequence ID" value="AAZ59858.1"/>
    <property type="molecule type" value="Genomic_DNA"/>
</dbReference>
<dbReference type="SMR" id="Q475S5"/>
<dbReference type="STRING" id="264198.Reut_A0476"/>
<dbReference type="KEGG" id="reu:Reut_A0476"/>
<dbReference type="eggNOG" id="COG0162">
    <property type="taxonomic scope" value="Bacteria"/>
</dbReference>
<dbReference type="HOGENOM" id="CLU_024003_5_0_4"/>
<dbReference type="OrthoDB" id="9804243at2"/>
<dbReference type="GO" id="GO:0005829">
    <property type="term" value="C:cytosol"/>
    <property type="evidence" value="ECO:0007669"/>
    <property type="project" value="TreeGrafter"/>
</dbReference>
<dbReference type="GO" id="GO:0005524">
    <property type="term" value="F:ATP binding"/>
    <property type="evidence" value="ECO:0007669"/>
    <property type="project" value="UniProtKB-UniRule"/>
</dbReference>
<dbReference type="GO" id="GO:0003723">
    <property type="term" value="F:RNA binding"/>
    <property type="evidence" value="ECO:0007669"/>
    <property type="project" value="UniProtKB-KW"/>
</dbReference>
<dbReference type="GO" id="GO:0004831">
    <property type="term" value="F:tyrosine-tRNA ligase activity"/>
    <property type="evidence" value="ECO:0007669"/>
    <property type="project" value="UniProtKB-UniRule"/>
</dbReference>
<dbReference type="GO" id="GO:0006437">
    <property type="term" value="P:tyrosyl-tRNA aminoacylation"/>
    <property type="evidence" value="ECO:0007669"/>
    <property type="project" value="UniProtKB-UniRule"/>
</dbReference>
<dbReference type="CDD" id="cd00165">
    <property type="entry name" value="S4"/>
    <property type="match status" value="1"/>
</dbReference>
<dbReference type="CDD" id="cd00805">
    <property type="entry name" value="TyrRS_core"/>
    <property type="match status" value="1"/>
</dbReference>
<dbReference type="FunFam" id="1.10.240.10:FF:000006">
    <property type="entry name" value="Tyrosine--tRNA ligase"/>
    <property type="match status" value="1"/>
</dbReference>
<dbReference type="FunFam" id="3.10.290.10:FF:000022">
    <property type="entry name" value="Tyrosine--tRNA ligase"/>
    <property type="match status" value="1"/>
</dbReference>
<dbReference type="FunFam" id="3.40.50.620:FF:000061">
    <property type="entry name" value="Tyrosine--tRNA ligase"/>
    <property type="match status" value="1"/>
</dbReference>
<dbReference type="Gene3D" id="3.40.50.620">
    <property type="entry name" value="HUPs"/>
    <property type="match status" value="1"/>
</dbReference>
<dbReference type="Gene3D" id="3.10.290.10">
    <property type="entry name" value="RNA-binding S4 domain"/>
    <property type="match status" value="1"/>
</dbReference>
<dbReference type="Gene3D" id="1.10.240.10">
    <property type="entry name" value="Tyrosyl-Transfer RNA Synthetase"/>
    <property type="match status" value="1"/>
</dbReference>
<dbReference type="HAMAP" id="MF_02007">
    <property type="entry name" value="Tyr_tRNA_synth_type2"/>
    <property type="match status" value="1"/>
</dbReference>
<dbReference type="InterPro" id="IPR001412">
    <property type="entry name" value="aa-tRNA-synth_I_CS"/>
</dbReference>
<dbReference type="InterPro" id="IPR002305">
    <property type="entry name" value="aa-tRNA-synth_Ic"/>
</dbReference>
<dbReference type="InterPro" id="IPR014729">
    <property type="entry name" value="Rossmann-like_a/b/a_fold"/>
</dbReference>
<dbReference type="InterPro" id="IPR002942">
    <property type="entry name" value="S4_RNA-bd"/>
</dbReference>
<dbReference type="InterPro" id="IPR036986">
    <property type="entry name" value="S4_RNA-bd_sf"/>
</dbReference>
<dbReference type="InterPro" id="IPR002307">
    <property type="entry name" value="Tyr-tRNA-ligase"/>
</dbReference>
<dbReference type="InterPro" id="IPR024088">
    <property type="entry name" value="Tyr-tRNA-ligase_bac-type"/>
</dbReference>
<dbReference type="InterPro" id="IPR024108">
    <property type="entry name" value="Tyr-tRNA-ligase_bac_2"/>
</dbReference>
<dbReference type="NCBIfam" id="TIGR00234">
    <property type="entry name" value="tyrS"/>
    <property type="match status" value="1"/>
</dbReference>
<dbReference type="PANTHER" id="PTHR11766:SF1">
    <property type="entry name" value="TYROSINE--TRNA LIGASE"/>
    <property type="match status" value="1"/>
</dbReference>
<dbReference type="PANTHER" id="PTHR11766">
    <property type="entry name" value="TYROSYL-TRNA SYNTHETASE"/>
    <property type="match status" value="1"/>
</dbReference>
<dbReference type="Pfam" id="PF01479">
    <property type="entry name" value="S4"/>
    <property type="match status" value="1"/>
</dbReference>
<dbReference type="Pfam" id="PF00579">
    <property type="entry name" value="tRNA-synt_1b"/>
    <property type="match status" value="1"/>
</dbReference>
<dbReference type="PRINTS" id="PR01040">
    <property type="entry name" value="TRNASYNTHTYR"/>
</dbReference>
<dbReference type="SMART" id="SM00363">
    <property type="entry name" value="S4"/>
    <property type="match status" value="1"/>
</dbReference>
<dbReference type="SUPFAM" id="SSF55174">
    <property type="entry name" value="Alpha-L RNA-binding motif"/>
    <property type="match status" value="1"/>
</dbReference>
<dbReference type="SUPFAM" id="SSF52374">
    <property type="entry name" value="Nucleotidylyl transferase"/>
    <property type="match status" value="1"/>
</dbReference>
<dbReference type="PROSITE" id="PS00178">
    <property type="entry name" value="AA_TRNA_LIGASE_I"/>
    <property type="match status" value="1"/>
</dbReference>
<dbReference type="PROSITE" id="PS50889">
    <property type="entry name" value="S4"/>
    <property type="match status" value="1"/>
</dbReference>
<sequence length="413" mass="45465">MTEASSGPAAKYPLTPSVMHALEVSKRGCDELLIEAEWLQKLARSEATGVPLRIKLGLDPTAPDIHIGHTVVLNKLRQLQDLGHQVIFLIGDFTSTIGDPSGRNSTRPPLTREQIEANAQTYYRQASLVLDPARTEIRYNSEWCDPLGARGMIQLAAKYTVARMMERDDFTKRFRSGIPISVHEFLYPLMQGYDSVALKSDLELGGTDQKFNLLVGRELQKEYGQEPQCILTMPLLVGLDGVEKMSKSKGNYVGVTEAPNEMFGKLMSISDDLMWQYFTLLSFRPLAEIDLMKQEIAAGRNPRDCKVLLAQEIVARFHSQADAEKALEDFNHRARGGVPDDIPAVSLSGAPLGIAQLLKQANLVPSTSEANRNIEQGGVKIDGATVSDKAVKVAAGTYVVQVGKRRFARVTLA</sequence>
<keyword id="KW-0030">Aminoacyl-tRNA synthetase</keyword>
<keyword id="KW-0067">ATP-binding</keyword>
<keyword id="KW-0963">Cytoplasm</keyword>
<keyword id="KW-0436">Ligase</keyword>
<keyword id="KW-0547">Nucleotide-binding</keyword>
<keyword id="KW-0648">Protein biosynthesis</keyword>
<keyword id="KW-0694">RNA-binding</keyword>
<comment type="function">
    <text evidence="1">Catalyzes the attachment of tyrosine to tRNA(Tyr) in a two-step reaction: tyrosine is first activated by ATP to form Tyr-AMP and then transferred to the acceptor end of tRNA(Tyr).</text>
</comment>
<comment type="catalytic activity">
    <reaction evidence="1">
        <text>tRNA(Tyr) + L-tyrosine + ATP = L-tyrosyl-tRNA(Tyr) + AMP + diphosphate + H(+)</text>
        <dbReference type="Rhea" id="RHEA:10220"/>
        <dbReference type="Rhea" id="RHEA-COMP:9706"/>
        <dbReference type="Rhea" id="RHEA-COMP:9707"/>
        <dbReference type="ChEBI" id="CHEBI:15378"/>
        <dbReference type="ChEBI" id="CHEBI:30616"/>
        <dbReference type="ChEBI" id="CHEBI:33019"/>
        <dbReference type="ChEBI" id="CHEBI:58315"/>
        <dbReference type="ChEBI" id="CHEBI:78442"/>
        <dbReference type="ChEBI" id="CHEBI:78536"/>
        <dbReference type="ChEBI" id="CHEBI:456215"/>
        <dbReference type="EC" id="6.1.1.1"/>
    </reaction>
</comment>
<comment type="subunit">
    <text evidence="1">Homodimer.</text>
</comment>
<comment type="subcellular location">
    <subcellularLocation>
        <location evidence="1">Cytoplasm</location>
    </subcellularLocation>
</comment>
<comment type="similarity">
    <text evidence="1">Belongs to the class-I aminoacyl-tRNA synthetase family. TyrS type 2 subfamily.</text>
</comment>
<gene>
    <name evidence="1" type="primary">tyrS</name>
    <name type="ordered locus">Reut_A0476</name>
</gene>
<feature type="chain" id="PRO_0000236758" description="Tyrosine--tRNA ligase">
    <location>
        <begin position="1"/>
        <end position="413"/>
    </location>
</feature>
<feature type="domain" description="S4 RNA-binding" evidence="1">
    <location>
        <begin position="352"/>
        <end position="412"/>
    </location>
</feature>
<feature type="short sequence motif" description="'HIGH' region">
    <location>
        <begin position="60"/>
        <end position="69"/>
    </location>
</feature>
<feature type="short sequence motif" description="'KMSKS' region">
    <location>
        <begin position="244"/>
        <end position="248"/>
    </location>
</feature>
<feature type="binding site" evidence="1">
    <location>
        <position position="247"/>
    </location>
    <ligand>
        <name>ATP</name>
        <dbReference type="ChEBI" id="CHEBI:30616"/>
    </ligand>
</feature>
<accession>Q475S5</accession>
<reference key="1">
    <citation type="journal article" date="2010" name="PLoS ONE">
        <title>The complete multipartite genome sequence of Cupriavidus necator JMP134, a versatile pollutant degrader.</title>
        <authorList>
            <person name="Lykidis A."/>
            <person name="Perez-Pantoja D."/>
            <person name="Ledger T."/>
            <person name="Mavromatis K."/>
            <person name="Anderson I.J."/>
            <person name="Ivanova N.N."/>
            <person name="Hooper S.D."/>
            <person name="Lapidus A."/>
            <person name="Lucas S."/>
            <person name="Gonzalez B."/>
            <person name="Kyrpides N.C."/>
        </authorList>
    </citation>
    <scope>NUCLEOTIDE SEQUENCE [LARGE SCALE GENOMIC DNA]</scope>
    <source>
        <strain>JMP134 / LMG 1197</strain>
    </source>
</reference>
<proteinExistence type="inferred from homology"/>